<dbReference type="EC" id="2.7.1.33" evidence="1"/>
<dbReference type="EMBL" id="CP001638">
    <property type="protein sequence ID" value="ACS23007.1"/>
    <property type="molecule type" value="Genomic_DNA"/>
</dbReference>
<dbReference type="SMR" id="C5D391"/>
<dbReference type="STRING" id="471223.GWCH70_0065"/>
<dbReference type="KEGG" id="gwc:GWCH70_0065"/>
<dbReference type="eggNOG" id="COG1521">
    <property type="taxonomic scope" value="Bacteria"/>
</dbReference>
<dbReference type="HOGENOM" id="CLU_066627_1_0_9"/>
<dbReference type="OrthoDB" id="9804707at2"/>
<dbReference type="UniPathway" id="UPA00241">
    <property type="reaction ID" value="UER00352"/>
</dbReference>
<dbReference type="GO" id="GO:0005737">
    <property type="term" value="C:cytoplasm"/>
    <property type="evidence" value="ECO:0007669"/>
    <property type="project" value="UniProtKB-SubCell"/>
</dbReference>
<dbReference type="GO" id="GO:0005524">
    <property type="term" value="F:ATP binding"/>
    <property type="evidence" value="ECO:0007669"/>
    <property type="project" value="UniProtKB-UniRule"/>
</dbReference>
<dbReference type="GO" id="GO:0046872">
    <property type="term" value="F:metal ion binding"/>
    <property type="evidence" value="ECO:0007669"/>
    <property type="project" value="UniProtKB-KW"/>
</dbReference>
<dbReference type="GO" id="GO:0004594">
    <property type="term" value="F:pantothenate kinase activity"/>
    <property type="evidence" value="ECO:0007669"/>
    <property type="project" value="UniProtKB-UniRule"/>
</dbReference>
<dbReference type="GO" id="GO:0015937">
    <property type="term" value="P:coenzyme A biosynthetic process"/>
    <property type="evidence" value="ECO:0007669"/>
    <property type="project" value="UniProtKB-UniRule"/>
</dbReference>
<dbReference type="CDD" id="cd24015">
    <property type="entry name" value="ASKHA_NBD_PanK-III"/>
    <property type="match status" value="1"/>
</dbReference>
<dbReference type="Gene3D" id="3.30.420.40">
    <property type="match status" value="2"/>
</dbReference>
<dbReference type="HAMAP" id="MF_01274">
    <property type="entry name" value="Pantothen_kinase_3"/>
    <property type="match status" value="1"/>
</dbReference>
<dbReference type="InterPro" id="IPR043129">
    <property type="entry name" value="ATPase_NBD"/>
</dbReference>
<dbReference type="InterPro" id="IPR004619">
    <property type="entry name" value="Type_III_PanK"/>
</dbReference>
<dbReference type="NCBIfam" id="TIGR00671">
    <property type="entry name" value="baf"/>
    <property type="match status" value="1"/>
</dbReference>
<dbReference type="NCBIfam" id="NF009843">
    <property type="entry name" value="PRK13318.1-1"/>
    <property type="match status" value="1"/>
</dbReference>
<dbReference type="NCBIfam" id="NF009847">
    <property type="entry name" value="PRK13318.1-5"/>
    <property type="match status" value="1"/>
</dbReference>
<dbReference type="NCBIfam" id="NF009848">
    <property type="entry name" value="PRK13318.1-6"/>
    <property type="match status" value="1"/>
</dbReference>
<dbReference type="NCBIfam" id="NF009855">
    <property type="entry name" value="PRK13321.1"/>
    <property type="match status" value="1"/>
</dbReference>
<dbReference type="PANTHER" id="PTHR34265">
    <property type="entry name" value="TYPE III PANTOTHENATE KINASE"/>
    <property type="match status" value="1"/>
</dbReference>
<dbReference type="PANTHER" id="PTHR34265:SF1">
    <property type="entry name" value="TYPE III PANTOTHENATE KINASE"/>
    <property type="match status" value="1"/>
</dbReference>
<dbReference type="Pfam" id="PF03309">
    <property type="entry name" value="Pan_kinase"/>
    <property type="match status" value="1"/>
</dbReference>
<dbReference type="SUPFAM" id="SSF53067">
    <property type="entry name" value="Actin-like ATPase domain"/>
    <property type="match status" value="2"/>
</dbReference>
<evidence type="ECO:0000255" key="1">
    <source>
        <dbReference type="HAMAP-Rule" id="MF_01274"/>
    </source>
</evidence>
<gene>
    <name evidence="1" type="primary">coaX</name>
    <name type="ordered locus">GWCH70_0065</name>
</gene>
<reference key="1">
    <citation type="submission" date="2009-06" db="EMBL/GenBank/DDBJ databases">
        <title>Complete sequence of chromosome of Geopacillus sp. WCH70.</title>
        <authorList>
            <consortium name="US DOE Joint Genome Institute"/>
            <person name="Lucas S."/>
            <person name="Copeland A."/>
            <person name="Lapidus A."/>
            <person name="Glavina del Rio T."/>
            <person name="Dalin E."/>
            <person name="Tice H."/>
            <person name="Bruce D."/>
            <person name="Goodwin L."/>
            <person name="Pitluck S."/>
            <person name="Chertkov O."/>
            <person name="Brettin T."/>
            <person name="Detter J.C."/>
            <person name="Han C."/>
            <person name="Larimer F."/>
            <person name="Land M."/>
            <person name="Hauser L."/>
            <person name="Kyrpides N."/>
            <person name="Mikhailova N."/>
            <person name="Brumm P."/>
            <person name="Mead D.A."/>
            <person name="Richardson P."/>
        </authorList>
    </citation>
    <scope>NUCLEOTIDE SEQUENCE [LARGE SCALE GENOMIC DNA]</scope>
    <source>
        <strain>WCH70</strain>
    </source>
</reference>
<protein>
    <recommendedName>
        <fullName evidence="1">Type III pantothenate kinase</fullName>
        <ecNumber evidence="1">2.7.1.33</ecNumber>
    </recommendedName>
    <alternativeName>
        <fullName evidence="1">PanK-III</fullName>
    </alternativeName>
    <alternativeName>
        <fullName evidence="1">Pantothenic acid kinase</fullName>
    </alternativeName>
</protein>
<organism>
    <name type="scientific">Geobacillus sp. (strain WCH70)</name>
    <dbReference type="NCBI Taxonomy" id="471223"/>
    <lineage>
        <taxon>Bacteria</taxon>
        <taxon>Bacillati</taxon>
        <taxon>Bacillota</taxon>
        <taxon>Bacilli</taxon>
        <taxon>Bacillales</taxon>
        <taxon>Anoxybacillaceae</taxon>
        <taxon>Geobacillus</taxon>
    </lineage>
</organism>
<feature type="chain" id="PRO_1000214190" description="Type III pantothenate kinase">
    <location>
        <begin position="1"/>
        <end position="258"/>
    </location>
</feature>
<feature type="active site" description="Proton acceptor" evidence="1">
    <location>
        <position position="109"/>
    </location>
</feature>
<feature type="binding site" evidence="1">
    <location>
        <begin position="6"/>
        <end position="13"/>
    </location>
    <ligand>
        <name>ATP</name>
        <dbReference type="ChEBI" id="CHEBI:30616"/>
    </ligand>
</feature>
<feature type="binding site" evidence="1">
    <location>
        <position position="100"/>
    </location>
    <ligand>
        <name>substrate</name>
    </ligand>
</feature>
<feature type="binding site" evidence="1">
    <location>
        <begin position="107"/>
        <end position="110"/>
    </location>
    <ligand>
        <name>substrate</name>
    </ligand>
</feature>
<feature type="binding site" evidence="1">
    <location>
        <position position="129"/>
    </location>
    <ligand>
        <name>K(+)</name>
        <dbReference type="ChEBI" id="CHEBI:29103"/>
    </ligand>
</feature>
<feature type="binding site" evidence="1">
    <location>
        <position position="132"/>
    </location>
    <ligand>
        <name>ATP</name>
        <dbReference type="ChEBI" id="CHEBI:30616"/>
    </ligand>
</feature>
<feature type="binding site" evidence="1">
    <location>
        <position position="184"/>
    </location>
    <ligand>
        <name>substrate</name>
    </ligand>
</feature>
<comment type="function">
    <text evidence="1">Catalyzes the phosphorylation of pantothenate (Pan), the first step in CoA biosynthesis.</text>
</comment>
<comment type="catalytic activity">
    <reaction evidence="1">
        <text>(R)-pantothenate + ATP = (R)-4'-phosphopantothenate + ADP + H(+)</text>
        <dbReference type="Rhea" id="RHEA:16373"/>
        <dbReference type="ChEBI" id="CHEBI:10986"/>
        <dbReference type="ChEBI" id="CHEBI:15378"/>
        <dbReference type="ChEBI" id="CHEBI:29032"/>
        <dbReference type="ChEBI" id="CHEBI:30616"/>
        <dbReference type="ChEBI" id="CHEBI:456216"/>
        <dbReference type="EC" id="2.7.1.33"/>
    </reaction>
</comment>
<comment type="cofactor">
    <cofactor evidence="1">
        <name>NH4(+)</name>
        <dbReference type="ChEBI" id="CHEBI:28938"/>
    </cofactor>
    <cofactor evidence="1">
        <name>K(+)</name>
        <dbReference type="ChEBI" id="CHEBI:29103"/>
    </cofactor>
    <text evidence="1">A monovalent cation. Ammonium or potassium.</text>
</comment>
<comment type="pathway">
    <text evidence="1">Cofactor biosynthesis; coenzyme A biosynthesis; CoA from (R)-pantothenate: step 1/5.</text>
</comment>
<comment type="subunit">
    <text evidence="1">Homodimer.</text>
</comment>
<comment type="subcellular location">
    <subcellularLocation>
        <location evidence="1">Cytoplasm</location>
    </subcellularLocation>
</comment>
<comment type="similarity">
    <text evidence="1">Belongs to the type III pantothenate kinase family.</text>
</comment>
<name>COAX_GEOSW</name>
<proteinExistence type="inferred from homology"/>
<accession>C5D391</accession>
<sequence length="258" mass="28078">MIFVLDVGNTNTVLGVYDGDELKHHWRIETSRGKTEDEYAMTIKALLNHVGLQFSDIDGIIISSVVPPIMFALERMCLKYFHIKPIIVGPGIKTGLNIKYDNPREVGADRIVNAVAGIHLYGSPLIIVDFGTATTYCYINEHKQYMGGAIAPGIMISTEALFARAAKLPRIEIARPDDIIGKNTVSAMQAGILYGYVGQVEGIVSRMKAKSSVPPKVIATGGLASLIASESSVIDIVDPFLTLTGLKILYEKNVDKKQ</sequence>
<keyword id="KW-0067">ATP-binding</keyword>
<keyword id="KW-0173">Coenzyme A biosynthesis</keyword>
<keyword id="KW-0963">Cytoplasm</keyword>
<keyword id="KW-0418">Kinase</keyword>
<keyword id="KW-0479">Metal-binding</keyword>
<keyword id="KW-0547">Nucleotide-binding</keyword>
<keyword id="KW-0630">Potassium</keyword>
<keyword id="KW-0808">Transferase</keyword>